<reference key="1">
    <citation type="journal article" date="2003" name="Proc. Natl. Acad. Sci. U.S.A.">
        <title>The genome sequence of Blochmannia floridanus: comparative analysis of reduced genomes.</title>
        <authorList>
            <person name="Gil R."/>
            <person name="Silva F.J."/>
            <person name="Zientz E."/>
            <person name="Delmotte F."/>
            <person name="Gonzalez-Candelas F."/>
            <person name="Latorre A."/>
            <person name="Rausell C."/>
            <person name="Kamerbeek J."/>
            <person name="Gadau J."/>
            <person name="Hoelldobler B."/>
            <person name="van Ham R.C.H.J."/>
            <person name="Gross R."/>
            <person name="Moya A."/>
        </authorList>
    </citation>
    <scope>NUCLEOTIDE SEQUENCE [LARGE SCALE GENOMIC DNA]</scope>
</reference>
<organism>
    <name type="scientific">Blochmanniella floridana</name>
    <dbReference type="NCBI Taxonomy" id="203907"/>
    <lineage>
        <taxon>Bacteria</taxon>
        <taxon>Pseudomonadati</taxon>
        <taxon>Pseudomonadota</taxon>
        <taxon>Gammaproteobacteria</taxon>
        <taxon>Enterobacterales</taxon>
        <taxon>Enterobacteriaceae</taxon>
        <taxon>ant endosymbionts</taxon>
        <taxon>Candidatus Blochmanniella</taxon>
    </lineage>
</organism>
<evidence type="ECO:0000255" key="1">
    <source>
        <dbReference type="HAMAP-Rule" id="MF_00473"/>
    </source>
</evidence>
<feature type="chain" id="PRO_0000180601" description="Glucose-6-phosphate isomerase">
    <location>
        <begin position="1"/>
        <end position="558"/>
    </location>
</feature>
<feature type="active site" description="Proton donor" evidence="1">
    <location>
        <position position="363"/>
    </location>
</feature>
<feature type="active site" evidence="1">
    <location>
        <position position="394"/>
    </location>
</feature>
<feature type="active site" evidence="1">
    <location>
        <position position="522"/>
    </location>
</feature>
<proteinExistence type="inferred from homology"/>
<dbReference type="EC" id="5.3.1.9" evidence="1"/>
<dbReference type="EMBL" id="BX248583">
    <property type="protein sequence ID" value="CAD83304.1"/>
    <property type="molecule type" value="Genomic_DNA"/>
</dbReference>
<dbReference type="SMR" id="Q7VRI4"/>
<dbReference type="STRING" id="203907.Bfl629"/>
<dbReference type="KEGG" id="bfl:Bfl629"/>
<dbReference type="eggNOG" id="COG0166">
    <property type="taxonomic scope" value="Bacteria"/>
</dbReference>
<dbReference type="HOGENOM" id="CLU_017947_3_1_6"/>
<dbReference type="OrthoDB" id="140919at2"/>
<dbReference type="UniPathway" id="UPA00109">
    <property type="reaction ID" value="UER00181"/>
</dbReference>
<dbReference type="UniPathway" id="UPA00138"/>
<dbReference type="Proteomes" id="UP000002192">
    <property type="component" value="Chromosome"/>
</dbReference>
<dbReference type="GO" id="GO:0005829">
    <property type="term" value="C:cytosol"/>
    <property type="evidence" value="ECO:0007669"/>
    <property type="project" value="TreeGrafter"/>
</dbReference>
<dbReference type="GO" id="GO:0097367">
    <property type="term" value="F:carbohydrate derivative binding"/>
    <property type="evidence" value="ECO:0007669"/>
    <property type="project" value="InterPro"/>
</dbReference>
<dbReference type="GO" id="GO:0004347">
    <property type="term" value="F:glucose-6-phosphate isomerase activity"/>
    <property type="evidence" value="ECO:0007669"/>
    <property type="project" value="UniProtKB-UniRule"/>
</dbReference>
<dbReference type="GO" id="GO:0048029">
    <property type="term" value="F:monosaccharide binding"/>
    <property type="evidence" value="ECO:0007669"/>
    <property type="project" value="TreeGrafter"/>
</dbReference>
<dbReference type="GO" id="GO:0006094">
    <property type="term" value="P:gluconeogenesis"/>
    <property type="evidence" value="ECO:0007669"/>
    <property type="project" value="UniProtKB-UniRule"/>
</dbReference>
<dbReference type="GO" id="GO:0051156">
    <property type="term" value="P:glucose 6-phosphate metabolic process"/>
    <property type="evidence" value="ECO:0007669"/>
    <property type="project" value="TreeGrafter"/>
</dbReference>
<dbReference type="GO" id="GO:0006096">
    <property type="term" value="P:glycolytic process"/>
    <property type="evidence" value="ECO:0007669"/>
    <property type="project" value="UniProtKB-UniRule"/>
</dbReference>
<dbReference type="CDD" id="cd05015">
    <property type="entry name" value="SIS_PGI_1"/>
    <property type="match status" value="1"/>
</dbReference>
<dbReference type="CDD" id="cd05016">
    <property type="entry name" value="SIS_PGI_2"/>
    <property type="match status" value="1"/>
</dbReference>
<dbReference type="FunFam" id="1.10.1390.10:FF:000001">
    <property type="entry name" value="Glucose-6-phosphate isomerase"/>
    <property type="match status" value="1"/>
</dbReference>
<dbReference type="FunFam" id="3.40.50.10490:FF:000004">
    <property type="entry name" value="Glucose-6-phosphate isomerase"/>
    <property type="match status" value="1"/>
</dbReference>
<dbReference type="Gene3D" id="1.10.1390.10">
    <property type="match status" value="1"/>
</dbReference>
<dbReference type="Gene3D" id="3.40.50.10490">
    <property type="entry name" value="Glucose-6-phosphate isomerase like protein, domain 1"/>
    <property type="match status" value="2"/>
</dbReference>
<dbReference type="HAMAP" id="MF_00473">
    <property type="entry name" value="G6P_isomerase"/>
    <property type="match status" value="1"/>
</dbReference>
<dbReference type="InterPro" id="IPR001672">
    <property type="entry name" value="G6P_Isomerase"/>
</dbReference>
<dbReference type="InterPro" id="IPR023096">
    <property type="entry name" value="G6P_Isomerase_C"/>
</dbReference>
<dbReference type="InterPro" id="IPR018189">
    <property type="entry name" value="Phosphoglucose_isomerase_CS"/>
</dbReference>
<dbReference type="InterPro" id="IPR046348">
    <property type="entry name" value="SIS_dom_sf"/>
</dbReference>
<dbReference type="InterPro" id="IPR035476">
    <property type="entry name" value="SIS_PGI_1"/>
</dbReference>
<dbReference type="InterPro" id="IPR035482">
    <property type="entry name" value="SIS_PGI_2"/>
</dbReference>
<dbReference type="NCBIfam" id="NF001211">
    <property type="entry name" value="PRK00179.1"/>
    <property type="match status" value="1"/>
</dbReference>
<dbReference type="PANTHER" id="PTHR11469">
    <property type="entry name" value="GLUCOSE-6-PHOSPHATE ISOMERASE"/>
    <property type="match status" value="1"/>
</dbReference>
<dbReference type="PANTHER" id="PTHR11469:SF1">
    <property type="entry name" value="GLUCOSE-6-PHOSPHATE ISOMERASE"/>
    <property type="match status" value="1"/>
</dbReference>
<dbReference type="Pfam" id="PF00342">
    <property type="entry name" value="PGI"/>
    <property type="match status" value="1"/>
</dbReference>
<dbReference type="PRINTS" id="PR00662">
    <property type="entry name" value="G6PISOMERASE"/>
</dbReference>
<dbReference type="SUPFAM" id="SSF53697">
    <property type="entry name" value="SIS domain"/>
    <property type="match status" value="1"/>
</dbReference>
<dbReference type="PROSITE" id="PS00765">
    <property type="entry name" value="P_GLUCOSE_ISOMERASE_1"/>
    <property type="match status" value="1"/>
</dbReference>
<dbReference type="PROSITE" id="PS00174">
    <property type="entry name" value="P_GLUCOSE_ISOMERASE_2"/>
    <property type="match status" value="1"/>
</dbReference>
<dbReference type="PROSITE" id="PS51463">
    <property type="entry name" value="P_GLUCOSE_ISOMERASE_3"/>
    <property type="match status" value="1"/>
</dbReference>
<keyword id="KW-0963">Cytoplasm</keyword>
<keyword id="KW-0312">Gluconeogenesis</keyword>
<keyword id="KW-0324">Glycolysis</keyword>
<keyword id="KW-0413">Isomerase</keyword>
<keyword id="KW-1185">Reference proteome</keyword>
<name>G6PI_BLOFL</name>
<gene>
    <name evidence="1" type="primary">pgi</name>
    <name type="ordered locus">Bfl629</name>
</gene>
<sequence length="558" mass="64090">MKNINPTKTKSWKSLKKHFLNINTTHILDLFKQNKYRFLSFSTIFNNEILLDYSKNLITEETINKLIDLAKECDLPGAIKSMFQGAKINRSENRAVLHTALRNRKNIPILVDGHDIMPNINTVLEKMKIFCQNIIQGYWKGYTNKNITDIVNIGIGGSNLGPHMVTEALTPYKNHLNIHFVSNIDGTHLFEVLKKINPETTLFLITSKTFTTQETMTNAFSARNWFVQKITKSSSFNHYEQHISKHFIALSANPVEVKKFGINPSTNMFEFWEWVGGRYSLWSSVGLSIMLSLGSNHFESLLDGAYAMDMHFKNTPLNKNIPVILALIGIWYNNFFLSETEAIFPYDQYMHRFAAYIQQSNMESNGKCVDRNGYPINYQTGPIVWGESGTNGQHSFFQLIHQGTKMIPCDFIAPVLSHHPIFDHHDKLIANFLAQTKALAFGKKLEEITQEYITKKQSYIYDLNILPFKVFKGNNPSNSILIKKITPYTLGALIALYEHKIFTQGVIFNIYTFDQWGVELGKQLADDIYSILKQTNINPQYDSSTNGLINYYKYWSQA</sequence>
<protein>
    <recommendedName>
        <fullName evidence="1">Glucose-6-phosphate isomerase</fullName>
        <shortName evidence="1">GPI</shortName>
        <ecNumber evidence="1">5.3.1.9</ecNumber>
    </recommendedName>
    <alternativeName>
        <fullName evidence="1">Phosphoglucose isomerase</fullName>
        <shortName evidence="1">PGI</shortName>
    </alternativeName>
    <alternativeName>
        <fullName evidence="1">Phosphohexose isomerase</fullName>
        <shortName evidence="1">PHI</shortName>
    </alternativeName>
</protein>
<comment type="function">
    <text evidence="1">Catalyzes the reversible isomerization of glucose-6-phosphate to fructose-6-phosphate.</text>
</comment>
<comment type="catalytic activity">
    <reaction evidence="1">
        <text>alpha-D-glucose 6-phosphate = beta-D-fructose 6-phosphate</text>
        <dbReference type="Rhea" id="RHEA:11816"/>
        <dbReference type="ChEBI" id="CHEBI:57634"/>
        <dbReference type="ChEBI" id="CHEBI:58225"/>
        <dbReference type="EC" id="5.3.1.9"/>
    </reaction>
</comment>
<comment type="pathway">
    <text evidence="1">Carbohydrate biosynthesis; gluconeogenesis.</text>
</comment>
<comment type="pathway">
    <text evidence="1">Carbohydrate degradation; glycolysis; D-glyceraldehyde 3-phosphate and glycerone phosphate from D-glucose: step 2/4.</text>
</comment>
<comment type="subcellular location">
    <subcellularLocation>
        <location evidence="1">Cytoplasm</location>
    </subcellularLocation>
</comment>
<comment type="similarity">
    <text evidence="1">Belongs to the GPI family.</text>
</comment>
<accession>Q7VRI4</accession>